<name>ACPS_HELP2</name>
<feature type="chain" id="PRO_1000093880" description="Holo-[acyl-carrier-protein] synthase">
    <location>
        <begin position="1"/>
        <end position="118"/>
    </location>
</feature>
<feature type="binding site" evidence="1">
    <location>
        <position position="5"/>
    </location>
    <ligand>
        <name>Mg(2+)</name>
        <dbReference type="ChEBI" id="CHEBI:18420"/>
    </ligand>
</feature>
<feature type="binding site" evidence="1">
    <location>
        <position position="51"/>
    </location>
    <ligand>
        <name>Mg(2+)</name>
        <dbReference type="ChEBI" id="CHEBI:18420"/>
    </ligand>
</feature>
<accession>B6JM38</accession>
<sequence length="118" mass="13009">MIGVDIVSIARIEKCVKRFEMRFLERFLSPSEIVLCKDKFSSIAGFFALKEACSKALQVGIGKELSFLDMHISKSPKNAPLITLSKEKMDYFNIQSLSASISHDAGFAIAVVMVSSSN</sequence>
<reference key="1">
    <citation type="submission" date="2008-10" db="EMBL/GenBank/DDBJ databases">
        <title>The complete genome sequence of Helicobacter pylori strain P12.</title>
        <authorList>
            <person name="Fischer W."/>
            <person name="Windhager L."/>
            <person name="Karnholz A."/>
            <person name="Zeiller M."/>
            <person name="Zimmer R."/>
            <person name="Haas R."/>
        </authorList>
    </citation>
    <scope>NUCLEOTIDE SEQUENCE [LARGE SCALE GENOMIC DNA]</scope>
    <source>
        <strain>P12</strain>
    </source>
</reference>
<dbReference type="EC" id="2.7.8.7" evidence="1"/>
<dbReference type="EMBL" id="CP001217">
    <property type="protein sequence ID" value="ACJ07966.1"/>
    <property type="molecule type" value="Genomic_DNA"/>
</dbReference>
<dbReference type="SMR" id="B6JM38"/>
<dbReference type="KEGG" id="hpp:HPP12_0814"/>
<dbReference type="HOGENOM" id="CLU_089696_0_2_7"/>
<dbReference type="Proteomes" id="UP000008198">
    <property type="component" value="Chromosome"/>
</dbReference>
<dbReference type="GO" id="GO:0005737">
    <property type="term" value="C:cytoplasm"/>
    <property type="evidence" value="ECO:0007669"/>
    <property type="project" value="UniProtKB-SubCell"/>
</dbReference>
<dbReference type="GO" id="GO:0008897">
    <property type="term" value="F:holo-[acyl-carrier-protein] synthase activity"/>
    <property type="evidence" value="ECO:0007669"/>
    <property type="project" value="UniProtKB-UniRule"/>
</dbReference>
<dbReference type="GO" id="GO:0000287">
    <property type="term" value="F:magnesium ion binding"/>
    <property type="evidence" value="ECO:0007669"/>
    <property type="project" value="UniProtKB-UniRule"/>
</dbReference>
<dbReference type="GO" id="GO:0006633">
    <property type="term" value="P:fatty acid biosynthetic process"/>
    <property type="evidence" value="ECO:0007669"/>
    <property type="project" value="UniProtKB-UniRule"/>
</dbReference>
<dbReference type="Gene3D" id="3.90.470.20">
    <property type="entry name" value="4'-phosphopantetheinyl transferase domain"/>
    <property type="match status" value="1"/>
</dbReference>
<dbReference type="HAMAP" id="MF_00101">
    <property type="entry name" value="AcpS"/>
    <property type="match status" value="1"/>
</dbReference>
<dbReference type="InterPro" id="IPR008278">
    <property type="entry name" value="4-PPantetheinyl_Trfase_dom"/>
</dbReference>
<dbReference type="InterPro" id="IPR037143">
    <property type="entry name" value="4-PPantetheinyl_Trfase_dom_sf"/>
</dbReference>
<dbReference type="InterPro" id="IPR002582">
    <property type="entry name" value="ACPS"/>
</dbReference>
<dbReference type="InterPro" id="IPR004568">
    <property type="entry name" value="Ppantetheine-prot_Trfase_dom"/>
</dbReference>
<dbReference type="NCBIfam" id="TIGR00516">
    <property type="entry name" value="acpS"/>
    <property type="match status" value="1"/>
</dbReference>
<dbReference type="NCBIfam" id="TIGR00556">
    <property type="entry name" value="pantethn_trn"/>
    <property type="match status" value="1"/>
</dbReference>
<dbReference type="Pfam" id="PF01648">
    <property type="entry name" value="ACPS"/>
    <property type="match status" value="1"/>
</dbReference>
<dbReference type="SUPFAM" id="SSF56214">
    <property type="entry name" value="4'-phosphopantetheinyl transferase"/>
    <property type="match status" value="1"/>
</dbReference>
<organism>
    <name type="scientific">Helicobacter pylori (strain P12)</name>
    <dbReference type="NCBI Taxonomy" id="570508"/>
    <lineage>
        <taxon>Bacteria</taxon>
        <taxon>Pseudomonadati</taxon>
        <taxon>Campylobacterota</taxon>
        <taxon>Epsilonproteobacteria</taxon>
        <taxon>Campylobacterales</taxon>
        <taxon>Helicobacteraceae</taxon>
        <taxon>Helicobacter</taxon>
    </lineage>
</organism>
<protein>
    <recommendedName>
        <fullName evidence="1">Holo-[acyl-carrier-protein] synthase</fullName>
        <shortName evidence="1">Holo-ACP synthase</shortName>
        <ecNumber evidence="1">2.7.8.7</ecNumber>
    </recommendedName>
    <alternativeName>
        <fullName evidence="1">4'-phosphopantetheinyl transferase AcpS</fullName>
    </alternativeName>
</protein>
<proteinExistence type="inferred from homology"/>
<gene>
    <name evidence="1" type="primary">acpS</name>
    <name type="ordered locus">HPP12_0814</name>
</gene>
<comment type="function">
    <text evidence="1">Transfers the 4'-phosphopantetheine moiety from coenzyme A to a Ser of acyl-carrier-protein.</text>
</comment>
<comment type="catalytic activity">
    <reaction evidence="1">
        <text>apo-[ACP] + CoA = holo-[ACP] + adenosine 3',5'-bisphosphate + H(+)</text>
        <dbReference type="Rhea" id="RHEA:12068"/>
        <dbReference type="Rhea" id="RHEA-COMP:9685"/>
        <dbReference type="Rhea" id="RHEA-COMP:9690"/>
        <dbReference type="ChEBI" id="CHEBI:15378"/>
        <dbReference type="ChEBI" id="CHEBI:29999"/>
        <dbReference type="ChEBI" id="CHEBI:57287"/>
        <dbReference type="ChEBI" id="CHEBI:58343"/>
        <dbReference type="ChEBI" id="CHEBI:64479"/>
        <dbReference type="EC" id="2.7.8.7"/>
    </reaction>
</comment>
<comment type="cofactor">
    <cofactor evidence="1">
        <name>Mg(2+)</name>
        <dbReference type="ChEBI" id="CHEBI:18420"/>
    </cofactor>
</comment>
<comment type="subcellular location">
    <subcellularLocation>
        <location evidence="1">Cytoplasm</location>
    </subcellularLocation>
</comment>
<comment type="similarity">
    <text evidence="1">Belongs to the P-Pant transferase superfamily. AcpS family.</text>
</comment>
<evidence type="ECO:0000255" key="1">
    <source>
        <dbReference type="HAMAP-Rule" id="MF_00101"/>
    </source>
</evidence>
<keyword id="KW-0963">Cytoplasm</keyword>
<keyword id="KW-0275">Fatty acid biosynthesis</keyword>
<keyword id="KW-0276">Fatty acid metabolism</keyword>
<keyword id="KW-0444">Lipid biosynthesis</keyword>
<keyword id="KW-0443">Lipid metabolism</keyword>
<keyword id="KW-0460">Magnesium</keyword>
<keyword id="KW-0479">Metal-binding</keyword>
<keyword id="KW-0808">Transferase</keyword>